<accession>Q897L3</accession>
<feature type="chain" id="PRO_0000150926" description="Cobalamin biosynthesis protein CobD">
    <location>
        <begin position="1"/>
        <end position="317"/>
    </location>
</feature>
<feature type="transmembrane region" description="Helical" evidence="1">
    <location>
        <begin position="20"/>
        <end position="40"/>
    </location>
</feature>
<feature type="transmembrane region" description="Helical" evidence="1">
    <location>
        <begin position="56"/>
        <end position="76"/>
    </location>
</feature>
<feature type="transmembrane region" description="Helical" evidence="1">
    <location>
        <begin position="80"/>
        <end position="100"/>
    </location>
</feature>
<feature type="transmembrane region" description="Helical" evidence="1">
    <location>
        <begin position="152"/>
        <end position="172"/>
    </location>
</feature>
<feature type="transmembrane region" description="Helical" evidence="1">
    <location>
        <begin position="203"/>
        <end position="223"/>
    </location>
</feature>
<feature type="transmembrane region" description="Helical" evidence="1">
    <location>
        <begin position="292"/>
        <end position="312"/>
    </location>
</feature>
<evidence type="ECO:0000255" key="1">
    <source>
        <dbReference type="HAMAP-Rule" id="MF_00024"/>
    </source>
</evidence>
<evidence type="ECO:0000305" key="2"/>
<reference key="1">
    <citation type="journal article" date="2003" name="Proc. Natl. Acad. Sci. U.S.A.">
        <title>The genome sequence of Clostridium tetani, the causative agent of tetanus disease.</title>
        <authorList>
            <person name="Brueggemann H."/>
            <person name="Baeumer S."/>
            <person name="Fricke W.F."/>
            <person name="Wiezer A."/>
            <person name="Liesegang H."/>
            <person name="Decker I."/>
            <person name="Herzberg C."/>
            <person name="Martinez-Arias R."/>
            <person name="Merkl R."/>
            <person name="Henne A."/>
            <person name="Gottschalk G."/>
        </authorList>
    </citation>
    <scope>NUCLEOTIDE SEQUENCE [LARGE SCALE GENOMIC DNA]</scope>
    <source>
        <strain>Massachusetts / E88</strain>
    </source>
</reference>
<organism>
    <name type="scientific">Clostridium tetani (strain Massachusetts / E88)</name>
    <dbReference type="NCBI Taxonomy" id="212717"/>
    <lineage>
        <taxon>Bacteria</taxon>
        <taxon>Bacillati</taxon>
        <taxon>Bacillota</taxon>
        <taxon>Clostridia</taxon>
        <taxon>Eubacteriales</taxon>
        <taxon>Clostridiaceae</taxon>
        <taxon>Clostridium</taxon>
    </lineage>
</organism>
<comment type="function">
    <text evidence="1">Converts cobyric acid to cobinamide by the addition of aminopropanol on the F carboxylic group.</text>
</comment>
<comment type="pathway">
    <text evidence="1">Cofactor biosynthesis; adenosylcobalamin biosynthesis.</text>
</comment>
<comment type="subcellular location">
    <subcellularLocation>
        <location evidence="1">Cell membrane</location>
        <topology evidence="1">Multi-pass membrane protein</topology>
    </subcellularLocation>
</comment>
<comment type="similarity">
    <text evidence="1">Belongs to the CobD/CbiB family.</text>
</comment>
<comment type="sequence caution" evidence="2">
    <conflict type="erroneous initiation">
        <sequence resource="EMBL-CDS" id="AAO35323"/>
    </conflict>
</comment>
<protein>
    <recommendedName>
        <fullName evidence="1">Cobalamin biosynthesis protein CobD</fullName>
    </recommendedName>
</protein>
<dbReference type="EMBL" id="AE015927">
    <property type="protein sequence ID" value="AAO35323.1"/>
    <property type="status" value="ALT_INIT"/>
    <property type="molecule type" value="Genomic_DNA"/>
</dbReference>
<dbReference type="SMR" id="Q897L3"/>
<dbReference type="STRING" id="212717.CTC_00721"/>
<dbReference type="GeneID" id="24254048"/>
<dbReference type="KEGG" id="ctc:CTC_00721"/>
<dbReference type="HOGENOM" id="CLU_054212_0_0_9"/>
<dbReference type="OrthoDB" id="9811967at2"/>
<dbReference type="UniPathway" id="UPA00148"/>
<dbReference type="Proteomes" id="UP000001412">
    <property type="component" value="Chromosome"/>
</dbReference>
<dbReference type="GO" id="GO:0005886">
    <property type="term" value="C:plasma membrane"/>
    <property type="evidence" value="ECO:0007669"/>
    <property type="project" value="UniProtKB-SubCell"/>
</dbReference>
<dbReference type="GO" id="GO:0015420">
    <property type="term" value="F:ABC-type vitamin B12 transporter activity"/>
    <property type="evidence" value="ECO:0007669"/>
    <property type="project" value="UniProtKB-UniRule"/>
</dbReference>
<dbReference type="GO" id="GO:0048472">
    <property type="term" value="F:threonine-phosphate decarboxylase activity"/>
    <property type="evidence" value="ECO:0007669"/>
    <property type="project" value="InterPro"/>
</dbReference>
<dbReference type="GO" id="GO:0009236">
    <property type="term" value="P:cobalamin biosynthetic process"/>
    <property type="evidence" value="ECO:0007669"/>
    <property type="project" value="UniProtKB-UniRule"/>
</dbReference>
<dbReference type="HAMAP" id="MF_00024">
    <property type="entry name" value="CobD_CbiB"/>
    <property type="match status" value="1"/>
</dbReference>
<dbReference type="InterPro" id="IPR004485">
    <property type="entry name" value="Cobalamin_biosynth_CobD/CbiB"/>
</dbReference>
<dbReference type="NCBIfam" id="TIGR00380">
    <property type="entry name" value="cobal_cbiB"/>
    <property type="match status" value="1"/>
</dbReference>
<dbReference type="PANTHER" id="PTHR34308">
    <property type="entry name" value="COBALAMIN BIOSYNTHESIS PROTEIN CBIB"/>
    <property type="match status" value="1"/>
</dbReference>
<dbReference type="PANTHER" id="PTHR34308:SF1">
    <property type="entry name" value="COBALAMIN BIOSYNTHESIS PROTEIN CBIB"/>
    <property type="match status" value="1"/>
</dbReference>
<dbReference type="Pfam" id="PF03186">
    <property type="entry name" value="CobD_Cbib"/>
    <property type="match status" value="1"/>
</dbReference>
<sequence length="317" mass="35621">MGLIDIIVAVLLDFAIGDPYWFPHPVIYIGKLISYLEEVGRKHFKSNKGLKTLGGLVVLTIAITSFGIPFLILWMVKDSFWIFHFLNIILIWTTLAAKSLKVEGKRVYYALKNEDIQEAREKLSYIVGRDTRNLTEEEIIRADIETIMENTADGVIAPLFYAMIGGAPFAMMYKGINTMDSMLGYMNDKYIHLGFFPAKVDDVFNFIPARISGVLICLSAPIVKGNIIRSFKVMLRDRKNHKSPNCAYPEGAGAGVMGIQLGGTNVYFGKAVYKPTIGDRIKDLHHELINDSVKLMYASETLMVIIYALTVTSYNLR</sequence>
<proteinExistence type="inferred from homology"/>
<name>COBD_CLOTE</name>
<gene>
    <name evidence="1" type="primary">cobD</name>
    <name type="ordered locus">CTC_00721</name>
</gene>
<keyword id="KW-1003">Cell membrane</keyword>
<keyword id="KW-0169">Cobalamin biosynthesis</keyword>
<keyword id="KW-0472">Membrane</keyword>
<keyword id="KW-1185">Reference proteome</keyword>
<keyword id="KW-0812">Transmembrane</keyword>
<keyword id="KW-1133">Transmembrane helix</keyword>